<reference key="1">
    <citation type="submission" date="2009-06" db="EMBL/GenBank/DDBJ databases">
        <title>Complete sequence of chromosome of Geopacillus sp. WCH70.</title>
        <authorList>
            <consortium name="US DOE Joint Genome Institute"/>
            <person name="Lucas S."/>
            <person name="Copeland A."/>
            <person name="Lapidus A."/>
            <person name="Glavina del Rio T."/>
            <person name="Dalin E."/>
            <person name="Tice H."/>
            <person name="Bruce D."/>
            <person name="Goodwin L."/>
            <person name="Pitluck S."/>
            <person name="Chertkov O."/>
            <person name="Brettin T."/>
            <person name="Detter J.C."/>
            <person name="Han C."/>
            <person name="Larimer F."/>
            <person name="Land M."/>
            <person name="Hauser L."/>
            <person name="Kyrpides N."/>
            <person name="Mikhailova N."/>
            <person name="Brumm P."/>
            <person name="Mead D.A."/>
            <person name="Richardson P."/>
        </authorList>
    </citation>
    <scope>NUCLEOTIDE SEQUENCE [LARGE SCALE GENOMIC DNA]</scope>
    <source>
        <strain>WCH70</strain>
    </source>
</reference>
<protein>
    <recommendedName>
        <fullName evidence="1">Phosphate acyltransferase</fullName>
        <ecNumber evidence="1">2.3.1.274</ecNumber>
    </recommendedName>
    <alternativeName>
        <fullName evidence="1">Acyl-ACP phosphotransacylase</fullName>
    </alternativeName>
    <alternativeName>
        <fullName evidence="1">Acyl-[acyl-carrier-protein]--phosphate acyltransferase</fullName>
    </alternativeName>
    <alternativeName>
        <fullName evidence="1">Phosphate-acyl-ACP acyltransferase</fullName>
    </alternativeName>
</protein>
<gene>
    <name evidence="1" type="primary">plsX</name>
    <name type="ordered locus">GWCH70_1079</name>
</gene>
<evidence type="ECO:0000255" key="1">
    <source>
        <dbReference type="HAMAP-Rule" id="MF_00019"/>
    </source>
</evidence>
<name>PLSX_GEOSW</name>
<dbReference type="EC" id="2.3.1.274" evidence="1"/>
<dbReference type="EMBL" id="CP001638">
    <property type="protein sequence ID" value="ACS23939.1"/>
    <property type="molecule type" value="Genomic_DNA"/>
</dbReference>
<dbReference type="SMR" id="C5D8T2"/>
<dbReference type="STRING" id="471223.GWCH70_1079"/>
<dbReference type="KEGG" id="gwc:GWCH70_1079"/>
<dbReference type="eggNOG" id="COG0416">
    <property type="taxonomic scope" value="Bacteria"/>
</dbReference>
<dbReference type="HOGENOM" id="CLU_039379_1_1_9"/>
<dbReference type="OrthoDB" id="9806408at2"/>
<dbReference type="UniPathway" id="UPA00085"/>
<dbReference type="GO" id="GO:0005737">
    <property type="term" value="C:cytoplasm"/>
    <property type="evidence" value="ECO:0007669"/>
    <property type="project" value="UniProtKB-SubCell"/>
</dbReference>
<dbReference type="GO" id="GO:0043811">
    <property type="term" value="F:phosphate:acyl-[acyl carrier protein] acyltransferase activity"/>
    <property type="evidence" value="ECO:0007669"/>
    <property type="project" value="UniProtKB-UniRule"/>
</dbReference>
<dbReference type="GO" id="GO:0006633">
    <property type="term" value="P:fatty acid biosynthetic process"/>
    <property type="evidence" value="ECO:0007669"/>
    <property type="project" value="UniProtKB-UniRule"/>
</dbReference>
<dbReference type="GO" id="GO:0008654">
    <property type="term" value="P:phospholipid biosynthetic process"/>
    <property type="evidence" value="ECO:0007669"/>
    <property type="project" value="UniProtKB-KW"/>
</dbReference>
<dbReference type="Gene3D" id="3.40.718.10">
    <property type="entry name" value="Isopropylmalate Dehydrogenase"/>
    <property type="match status" value="1"/>
</dbReference>
<dbReference type="HAMAP" id="MF_00019">
    <property type="entry name" value="PlsX"/>
    <property type="match status" value="1"/>
</dbReference>
<dbReference type="InterPro" id="IPR003664">
    <property type="entry name" value="FA_synthesis"/>
</dbReference>
<dbReference type="InterPro" id="IPR012281">
    <property type="entry name" value="Phospholipid_synth_PlsX-like"/>
</dbReference>
<dbReference type="NCBIfam" id="TIGR00182">
    <property type="entry name" value="plsX"/>
    <property type="match status" value="1"/>
</dbReference>
<dbReference type="PANTHER" id="PTHR30100">
    <property type="entry name" value="FATTY ACID/PHOSPHOLIPID SYNTHESIS PROTEIN PLSX"/>
    <property type="match status" value="1"/>
</dbReference>
<dbReference type="PANTHER" id="PTHR30100:SF1">
    <property type="entry name" value="PHOSPHATE ACYLTRANSFERASE"/>
    <property type="match status" value="1"/>
</dbReference>
<dbReference type="Pfam" id="PF02504">
    <property type="entry name" value="FA_synthesis"/>
    <property type="match status" value="1"/>
</dbReference>
<dbReference type="PIRSF" id="PIRSF002465">
    <property type="entry name" value="Phsphlp_syn_PlsX"/>
    <property type="match status" value="1"/>
</dbReference>
<dbReference type="SUPFAM" id="SSF53659">
    <property type="entry name" value="Isocitrate/Isopropylmalate dehydrogenase-like"/>
    <property type="match status" value="1"/>
</dbReference>
<sequence length="329" mass="35225">MKIAIDAMGGDHAPKEIVLGAMKAVQHFSDVHITLFGDEGKIRPYLTSDERITVIHTNEVIEATDEPVRAVRRKKQSSMVLMAEEVKEGRADACISAGNTGALMAAGLFVVGRIAGIDRPALAPTLPTIGGEGFLFLDVGANVDARPEHLLQYALMGAVYAEKVRGIPRPRIGLLNVGTEDQKGNDVAKKAFQLLRETDLNFIGNVEARDLLHGVADVVVTDGFTGNVALKTIEGTAISVFSMLKEALTSSFLSKLAAAILKPKLIDLKKTMDYSEYGGAALFGLNAPVVKAHGSSDANAIFHAVRQAREMVANDIITTIKEAIEQNHS</sequence>
<accession>C5D8T2</accession>
<proteinExistence type="inferred from homology"/>
<feature type="chain" id="PRO_1000201892" description="Phosphate acyltransferase">
    <location>
        <begin position="1"/>
        <end position="329"/>
    </location>
</feature>
<comment type="function">
    <text evidence="1">Catalyzes the reversible formation of acyl-phosphate (acyl-PO(4)) from acyl-[acyl-carrier-protein] (acyl-ACP). This enzyme utilizes acyl-ACP as fatty acyl donor, but not acyl-CoA.</text>
</comment>
<comment type="catalytic activity">
    <reaction evidence="1">
        <text>a fatty acyl-[ACP] + phosphate = an acyl phosphate + holo-[ACP]</text>
        <dbReference type="Rhea" id="RHEA:42292"/>
        <dbReference type="Rhea" id="RHEA-COMP:9685"/>
        <dbReference type="Rhea" id="RHEA-COMP:14125"/>
        <dbReference type="ChEBI" id="CHEBI:43474"/>
        <dbReference type="ChEBI" id="CHEBI:59918"/>
        <dbReference type="ChEBI" id="CHEBI:64479"/>
        <dbReference type="ChEBI" id="CHEBI:138651"/>
        <dbReference type="EC" id="2.3.1.274"/>
    </reaction>
</comment>
<comment type="pathway">
    <text evidence="1">Lipid metabolism; phospholipid metabolism.</text>
</comment>
<comment type="subunit">
    <text evidence="1">Homodimer. Probably interacts with PlsY.</text>
</comment>
<comment type="subcellular location">
    <subcellularLocation>
        <location evidence="1">Cytoplasm</location>
    </subcellularLocation>
    <text evidence="1">Associated with the membrane possibly through PlsY.</text>
</comment>
<comment type="similarity">
    <text evidence="1">Belongs to the PlsX family.</text>
</comment>
<keyword id="KW-0963">Cytoplasm</keyword>
<keyword id="KW-0444">Lipid biosynthesis</keyword>
<keyword id="KW-0443">Lipid metabolism</keyword>
<keyword id="KW-0594">Phospholipid biosynthesis</keyword>
<keyword id="KW-1208">Phospholipid metabolism</keyword>
<keyword id="KW-0808">Transferase</keyword>
<organism>
    <name type="scientific">Geobacillus sp. (strain WCH70)</name>
    <dbReference type="NCBI Taxonomy" id="471223"/>
    <lineage>
        <taxon>Bacteria</taxon>
        <taxon>Bacillati</taxon>
        <taxon>Bacillota</taxon>
        <taxon>Bacilli</taxon>
        <taxon>Bacillales</taxon>
        <taxon>Anoxybacillaceae</taxon>
        <taxon>Geobacillus</taxon>
    </lineage>
</organism>